<gene>
    <name type="primary">yaeP</name>
    <name type="ordered locus">b4406</name>
    <name type="ordered locus">JW0185</name>
</gene>
<evidence type="ECO:0000305" key="1"/>
<name>YAEP_ECOLI</name>
<dbReference type="EMBL" id="D49445">
    <property type="protein sequence ID" value="BAA08430.1"/>
    <property type="molecule type" value="Genomic_DNA"/>
</dbReference>
<dbReference type="EMBL" id="Z50870">
    <property type="protein sequence ID" value="CAA90753.1"/>
    <property type="molecule type" value="Genomic_DNA"/>
</dbReference>
<dbReference type="EMBL" id="U00096">
    <property type="protein sequence ID" value="AAT48124.1"/>
    <property type="molecule type" value="Genomic_DNA"/>
</dbReference>
<dbReference type="EMBL" id="AP009048">
    <property type="protein sequence ID" value="BAA77865.1"/>
    <property type="molecule type" value="Genomic_DNA"/>
</dbReference>
<dbReference type="RefSeq" id="WP_000417058.1">
    <property type="nucleotide sequence ID" value="NZ_STEB01000032.1"/>
</dbReference>
<dbReference type="RefSeq" id="YP_026160.1">
    <property type="nucleotide sequence ID" value="NC_000913.3"/>
</dbReference>
<dbReference type="SMR" id="P0A8K5"/>
<dbReference type="BioGRID" id="4261682">
    <property type="interactions" value="13"/>
</dbReference>
<dbReference type="FunCoup" id="P0A8K5">
    <property type="interactions" value="122"/>
</dbReference>
<dbReference type="IntAct" id="P0A8K5">
    <property type="interactions" value="1"/>
</dbReference>
<dbReference type="STRING" id="511145.b4406"/>
<dbReference type="jPOST" id="P0A8K5"/>
<dbReference type="PaxDb" id="511145-b4406"/>
<dbReference type="EnsemblBacteria" id="AAT48124">
    <property type="protein sequence ID" value="AAT48124"/>
    <property type="gene ID" value="b4406"/>
</dbReference>
<dbReference type="GeneID" id="1450233"/>
<dbReference type="KEGG" id="ecj:JW0185"/>
<dbReference type="KEGG" id="eco:b4406"/>
<dbReference type="KEGG" id="ecoc:C3026_00875"/>
<dbReference type="PATRIC" id="fig|511145.12.peg.197"/>
<dbReference type="EchoBASE" id="EB3013"/>
<dbReference type="eggNOG" id="ENOG5032Z3X">
    <property type="taxonomic scope" value="Bacteria"/>
</dbReference>
<dbReference type="HOGENOM" id="CLU_190008_0_0_6"/>
<dbReference type="InParanoid" id="P0A8K5"/>
<dbReference type="OMA" id="CVLKTLD"/>
<dbReference type="OrthoDB" id="5900992at2"/>
<dbReference type="PhylomeDB" id="P0A8K5"/>
<dbReference type="BioCyc" id="EcoCyc:MONOMER0-741"/>
<dbReference type="PRO" id="PR:P0A8K5"/>
<dbReference type="Proteomes" id="UP000000625">
    <property type="component" value="Chromosome"/>
</dbReference>
<dbReference type="HAMAP" id="MF_01064">
    <property type="entry name" value="UPF0253"/>
    <property type="match status" value="1"/>
</dbReference>
<dbReference type="InterPro" id="IPR009624">
    <property type="entry name" value="UPF0253"/>
</dbReference>
<dbReference type="NCBIfam" id="NF003436">
    <property type="entry name" value="PRK04964.1"/>
    <property type="match status" value="1"/>
</dbReference>
<dbReference type="Pfam" id="PF06786">
    <property type="entry name" value="UPF0253"/>
    <property type="match status" value="1"/>
</dbReference>
<sequence>MEKYCELIRKRYAEIASGDLGYVPDALGCVLKVLNEMAADDALSEAVREKAAYAAANLLVSDYVNE</sequence>
<protein>
    <recommendedName>
        <fullName>UPF0253 protein YaeP</fullName>
    </recommendedName>
</protein>
<comment type="similarity">
    <text evidence="1">Belongs to the UPF0253 family.</text>
</comment>
<accession>P0A8K5</accession>
<accession>P52099</accession>
<reference key="1">
    <citation type="submission" date="1995-12" db="EMBL/GenBank/DDBJ databases">
        <authorList>
            <person name="Yamamoto Y."/>
        </authorList>
    </citation>
    <scope>NUCLEOTIDE SEQUENCE [GENOMIC DNA]</scope>
    <source>
        <strain>K12 / W3110 / ATCC 27325 / DSM 5911</strain>
    </source>
</reference>
<reference key="2">
    <citation type="journal article" date="1998" name="Mol. Microbiol.">
        <title>An Escherichia coli gene (yaeO) suppresses temperature-sensitive mutations in essential genes by modulating Rho-dependent transcription termination.</title>
        <authorList>
            <person name="Pichoff S."/>
            <person name="Alibaud L."/>
            <person name="Guedant A."/>
            <person name="Castanie M.-P."/>
            <person name="Bouche J.-P."/>
        </authorList>
    </citation>
    <scope>NUCLEOTIDE SEQUENCE [GENOMIC DNA]</scope>
    <source>
        <strain>K12</strain>
    </source>
</reference>
<reference key="3">
    <citation type="submission" date="1996-02" db="EMBL/GenBank/DDBJ databases">
        <title>Systematic sequencing of the Escherichia coli genome: analysis of the 4.0 - 6.0 min (189,987 - 281,416bp) region.</title>
        <authorList>
            <person name="Takemoto K."/>
            <person name="Mori H."/>
            <person name="Murayama N."/>
            <person name="Kataoka K."/>
            <person name="Yano M."/>
            <person name="Itoh T."/>
            <person name="Yamamoto Y."/>
            <person name="Inokuchi H."/>
            <person name="Miki T."/>
            <person name="Hatada E."/>
            <person name="Fukuda R."/>
            <person name="Ichihara S."/>
            <person name="Mizuno T."/>
            <person name="Makino K."/>
            <person name="Nakata A."/>
            <person name="Yura T."/>
            <person name="Sampei G."/>
            <person name="Mizobuchi K."/>
        </authorList>
    </citation>
    <scope>NUCLEOTIDE SEQUENCE [LARGE SCALE GENOMIC DNA]</scope>
    <source>
        <strain>K12 / W3110 / ATCC 27325 / DSM 5911</strain>
    </source>
</reference>
<reference key="4">
    <citation type="journal article" date="1997" name="Science">
        <title>The complete genome sequence of Escherichia coli K-12.</title>
        <authorList>
            <person name="Blattner F.R."/>
            <person name="Plunkett G. III"/>
            <person name="Bloch C.A."/>
            <person name="Perna N.T."/>
            <person name="Burland V."/>
            <person name="Riley M."/>
            <person name="Collado-Vides J."/>
            <person name="Glasner J.D."/>
            <person name="Rode C.K."/>
            <person name="Mayhew G.F."/>
            <person name="Gregor J."/>
            <person name="Davis N.W."/>
            <person name="Kirkpatrick H.A."/>
            <person name="Goeden M.A."/>
            <person name="Rose D.J."/>
            <person name="Mau B."/>
            <person name="Shao Y."/>
        </authorList>
    </citation>
    <scope>NUCLEOTIDE SEQUENCE [LARGE SCALE GENOMIC DNA]</scope>
    <source>
        <strain>K12 / MG1655 / ATCC 47076</strain>
    </source>
</reference>
<reference key="5">
    <citation type="journal article" date="2006" name="Mol. Syst. Biol.">
        <title>Highly accurate genome sequences of Escherichia coli K-12 strains MG1655 and W3110.</title>
        <authorList>
            <person name="Hayashi K."/>
            <person name="Morooka N."/>
            <person name="Yamamoto Y."/>
            <person name="Fujita K."/>
            <person name="Isono K."/>
            <person name="Choi S."/>
            <person name="Ohtsubo E."/>
            <person name="Baba T."/>
            <person name="Wanner B.L."/>
            <person name="Mori H."/>
            <person name="Horiuchi T."/>
        </authorList>
    </citation>
    <scope>NUCLEOTIDE SEQUENCE [LARGE SCALE GENOMIC DNA]</scope>
    <source>
        <strain>K12 / W3110 / ATCC 27325 / DSM 5911</strain>
    </source>
</reference>
<organism>
    <name type="scientific">Escherichia coli (strain K12)</name>
    <dbReference type="NCBI Taxonomy" id="83333"/>
    <lineage>
        <taxon>Bacteria</taxon>
        <taxon>Pseudomonadati</taxon>
        <taxon>Pseudomonadota</taxon>
        <taxon>Gammaproteobacteria</taxon>
        <taxon>Enterobacterales</taxon>
        <taxon>Enterobacteriaceae</taxon>
        <taxon>Escherichia</taxon>
    </lineage>
</organism>
<proteinExistence type="inferred from homology"/>
<feature type="chain" id="PRO_0000215539" description="UPF0253 protein YaeP">
    <location>
        <begin position="1"/>
        <end position="66"/>
    </location>
</feature>
<keyword id="KW-1185">Reference proteome</keyword>